<evidence type="ECO:0000256" key="1">
    <source>
        <dbReference type="SAM" id="MobiDB-lite"/>
    </source>
</evidence>
<evidence type="ECO:0000305" key="2"/>
<feature type="chain" id="PRO_0000232707" description="Small ribosomal subunit protein eS8">
    <location>
        <begin position="1"/>
        <end position="184"/>
    </location>
</feature>
<feature type="region of interest" description="Disordered" evidence="1">
    <location>
        <begin position="1"/>
        <end position="23"/>
    </location>
</feature>
<feature type="compositionally biased region" description="Basic residues" evidence="1">
    <location>
        <begin position="7"/>
        <end position="23"/>
    </location>
</feature>
<reference key="1">
    <citation type="journal article" date="2005" name="Science">
        <title>Genome of the host-cell transforming parasite Theileria annulata compared with T. parva.</title>
        <authorList>
            <person name="Pain A."/>
            <person name="Renauld H."/>
            <person name="Berriman M."/>
            <person name="Murphy L."/>
            <person name="Yeats C.A."/>
            <person name="Weir W."/>
            <person name="Kerhornou A."/>
            <person name="Aslett M."/>
            <person name="Bishop R."/>
            <person name="Bouchier C."/>
            <person name="Cochet M."/>
            <person name="Coulson R.M.R."/>
            <person name="Cronin A."/>
            <person name="de Villiers E.P."/>
            <person name="Fraser A."/>
            <person name="Fosker N."/>
            <person name="Gardner M."/>
            <person name="Goble A."/>
            <person name="Griffiths-Jones S."/>
            <person name="Harris D.E."/>
            <person name="Katzer F."/>
            <person name="Larke N."/>
            <person name="Lord A."/>
            <person name="Maser P."/>
            <person name="McKellar S."/>
            <person name="Mooney P."/>
            <person name="Morton F."/>
            <person name="Nene V."/>
            <person name="O'Neil S."/>
            <person name="Price C."/>
            <person name="Quail M.A."/>
            <person name="Rabbinowitsch E."/>
            <person name="Rawlings N.D."/>
            <person name="Rutter S."/>
            <person name="Saunders D."/>
            <person name="Seeger K."/>
            <person name="Shah T."/>
            <person name="Squares R."/>
            <person name="Squares S."/>
            <person name="Tivey A."/>
            <person name="Walker A.R."/>
            <person name="Woodward J."/>
            <person name="Dobbelaere D.A.E."/>
            <person name="Langsley G."/>
            <person name="Rajandream M.A."/>
            <person name="McKeever D."/>
            <person name="Shiels B."/>
            <person name="Tait A."/>
            <person name="Barrell B.G."/>
            <person name="Hall N."/>
        </authorList>
    </citation>
    <scope>NUCLEOTIDE SEQUENCE [LARGE SCALE GENOMIC DNA]</scope>
    <source>
        <strain>Ankara</strain>
    </source>
</reference>
<protein>
    <recommendedName>
        <fullName evidence="2">Small ribosomal subunit protein eS8</fullName>
    </recommendedName>
    <alternativeName>
        <fullName>40S ribosomal protein S8</fullName>
    </alternativeName>
</protein>
<gene>
    <name type="primary">RPS8</name>
    <name type="ORF">TA16000</name>
</gene>
<dbReference type="EMBL" id="CR940348">
    <property type="protein sequence ID" value="CAI74037.1"/>
    <property type="molecule type" value="Genomic_DNA"/>
</dbReference>
<dbReference type="RefSeq" id="XP_951769.1">
    <property type="nucleotide sequence ID" value="XM_946676.1"/>
</dbReference>
<dbReference type="SMR" id="Q4UFS9"/>
<dbReference type="FunCoup" id="Q4UFS9">
    <property type="interactions" value="352"/>
</dbReference>
<dbReference type="STRING" id="5874.Q4UFS9"/>
<dbReference type="GeneID" id="3861846"/>
<dbReference type="KEGG" id="tan:TA16000"/>
<dbReference type="VEuPathDB" id="PiroplasmaDB:TA16000"/>
<dbReference type="eggNOG" id="KOG3283">
    <property type="taxonomic scope" value="Eukaryota"/>
</dbReference>
<dbReference type="InParanoid" id="Q4UFS9"/>
<dbReference type="OMA" id="QRPHYRK"/>
<dbReference type="OrthoDB" id="1703270at2759"/>
<dbReference type="Proteomes" id="UP000001950">
    <property type="component" value="Chromosome 2"/>
</dbReference>
<dbReference type="GO" id="GO:1990904">
    <property type="term" value="C:ribonucleoprotein complex"/>
    <property type="evidence" value="ECO:0007669"/>
    <property type="project" value="UniProtKB-KW"/>
</dbReference>
<dbReference type="GO" id="GO:0005840">
    <property type="term" value="C:ribosome"/>
    <property type="evidence" value="ECO:0007669"/>
    <property type="project" value="UniProtKB-KW"/>
</dbReference>
<dbReference type="GO" id="GO:0003735">
    <property type="term" value="F:structural constituent of ribosome"/>
    <property type="evidence" value="ECO:0007669"/>
    <property type="project" value="InterPro"/>
</dbReference>
<dbReference type="GO" id="GO:0006412">
    <property type="term" value="P:translation"/>
    <property type="evidence" value="ECO:0007669"/>
    <property type="project" value="InterPro"/>
</dbReference>
<dbReference type="CDD" id="cd11380">
    <property type="entry name" value="Ribosomal_S8e_like"/>
    <property type="match status" value="1"/>
</dbReference>
<dbReference type="FunFam" id="3.10.290.70:FF:000009">
    <property type="entry name" value="40S ribosomal protein S8"/>
    <property type="match status" value="1"/>
</dbReference>
<dbReference type="Gene3D" id="3.10.290.70">
    <property type="match status" value="1"/>
</dbReference>
<dbReference type="InterPro" id="IPR001047">
    <property type="entry name" value="Ribosomal_eS8"/>
</dbReference>
<dbReference type="InterPro" id="IPR018283">
    <property type="entry name" value="Ribosomal_eS8_CS"/>
</dbReference>
<dbReference type="InterPro" id="IPR022309">
    <property type="entry name" value="Ribosomal_Se8/biogenesis_NSA2"/>
</dbReference>
<dbReference type="NCBIfam" id="TIGR00307">
    <property type="entry name" value="eS8"/>
    <property type="match status" value="1"/>
</dbReference>
<dbReference type="PANTHER" id="PTHR10394">
    <property type="entry name" value="40S RIBOSOMAL PROTEIN S8"/>
    <property type="match status" value="1"/>
</dbReference>
<dbReference type="Pfam" id="PF01201">
    <property type="entry name" value="Ribosomal_S8e"/>
    <property type="match status" value="1"/>
</dbReference>
<dbReference type="PROSITE" id="PS01193">
    <property type="entry name" value="RIBOSOMAL_S8E"/>
    <property type="match status" value="1"/>
</dbReference>
<proteinExistence type="inferred from homology"/>
<name>RS8_THEAN</name>
<accession>Q4UFS9</accession>
<sequence length="184" mass="21061">MGISRDSRHKRRLTGGRYPVHKKKRKYELGRPSSNTKLGSRLVRKVRCRGGNLKFRALRLDSGNFSWGSQNVTRKTRVMDVVYNASSNELVRTKTLVKNAIVTVDPTPFKLWFKTHYGVELEDPQASEKVAGLVPKTLLEQFSSGRLLACISSRPGQCGRCDGYVLEGEELNFYRRRMDKKKRV</sequence>
<organism>
    <name type="scientific">Theileria annulata</name>
    <dbReference type="NCBI Taxonomy" id="5874"/>
    <lineage>
        <taxon>Eukaryota</taxon>
        <taxon>Sar</taxon>
        <taxon>Alveolata</taxon>
        <taxon>Apicomplexa</taxon>
        <taxon>Aconoidasida</taxon>
        <taxon>Piroplasmida</taxon>
        <taxon>Theileriidae</taxon>
        <taxon>Theileria</taxon>
    </lineage>
</organism>
<comment type="similarity">
    <text evidence="2">Belongs to the eukaryotic ribosomal protein eS8 family.</text>
</comment>
<keyword id="KW-1185">Reference proteome</keyword>
<keyword id="KW-0687">Ribonucleoprotein</keyword>
<keyword id="KW-0689">Ribosomal protein</keyword>